<proteinExistence type="inferred from homology"/>
<feature type="chain" id="PRO_1000145450" description="2,3-bisphosphoglycerate-independent phosphoglycerate mutase">
    <location>
        <begin position="1"/>
        <end position="406"/>
    </location>
</feature>
<name>APGM_METM6</name>
<organism>
    <name type="scientific">Methanococcus maripaludis (strain C6 / ATCC BAA-1332)</name>
    <dbReference type="NCBI Taxonomy" id="444158"/>
    <lineage>
        <taxon>Archaea</taxon>
        <taxon>Methanobacteriati</taxon>
        <taxon>Methanobacteriota</taxon>
        <taxon>Methanomada group</taxon>
        <taxon>Methanococci</taxon>
        <taxon>Methanococcales</taxon>
        <taxon>Methanococcaceae</taxon>
        <taxon>Methanococcus</taxon>
    </lineage>
</organism>
<accession>A9A9M4</accession>
<keyword id="KW-0324">Glycolysis</keyword>
<keyword id="KW-0413">Isomerase</keyword>
<protein>
    <recommendedName>
        <fullName evidence="1">2,3-bisphosphoglycerate-independent phosphoglycerate mutase</fullName>
        <shortName evidence="1">BPG-independent PGAM</shortName>
        <shortName evidence="1">Phosphoglyceromutase</shortName>
        <shortName evidence="1">aPGAM</shortName>
        <ecNumber evidence="1">5.4.2.12</ecNumber>
    </recommendedName>
</protein>
<evidence type="ECO:0000255" key="1">
    <source>
        <dbReference type="HAMAP-Rule" id="MF_01402"/>
    </source>
</evidence>
<sequence length="406" mass="44511">MKAVIFIMDGLGDRPNKDGNTPLKEAKTPVMDKMAKEGICGLMNAVDIGVRPGSDTAHLAILGYDPYTTYTGRGPFEACGVGVTVKPGDIAFRCNFSTVDENFTVMDRRAGRIENTLELEKELDGLKIDDVDIIFKESGGYRAALVLRGPGLSDKISDADPKKEGKKVKDINPLDDSKEAKKTAEIVNKLLKIAYEKLDKHPVNEERRKQNLPVANMIVPRGVGQVPEIMQFTEKTGLKGACIAGTGLIKGIAKMVGLDVIDVEGCDGTPNSDFMAKAFAIVKTLEDYDFILVNVKGADEAGHDGNYELKKEIIERIDGMLDYITKNINKDEVYIAMSGDHSTPIEEMDHSADPLPIVIWGKSVRVDDVEKFDEFSTYKGGLNWIKGTNIMPILMDLMSIAKKYGA</sequence>
<reference key="1">
    <citation type="submission" date="2007-10" db="EMBL/GenBank/DDBJ databases">
        <title>Complete sequence of Methanococcus maripaludis C6.</title>
        <authorList>
            <consortium name="US DOE Joint Genome Institute"/>
            <person name="Copeland A."/>
            <person name="Lucas S."/>
            <person name="Lapidus A."/>
            <person name="Barry K."/>
            <person name="Glavina del Rio T."/>
            <person name="Dalin E."/>
            <person name="Tice H."/>
            <person name="Pitluck S."/>
            <person name="Clum A."/>
            <person name="Schmutz J."/>
            <person name="Larimer F."/>
            <person name="Land M."/>
            <person name="Hauser L."/>
            <person name="Kyrpides N."/>
            <person name="Mikhailova N."/>
            <person name="Sieprawska-Lupa M."/>
            <person name="Whitman W.B."/>
            <person name="Richardson P."/>
        </authorList>
    </citation>
    <scope>NUCLEOTIDE SEQUENCE [LARGE SCALE GENOMIC DNA]</scope>
    <source>
        <strain>C6 / ATCC BAA-1332</strain>
    </source>
</reference>
<comment type="function">
    <text evidence="1">Catalyzes the interconversion of 2-phosphoglycerate and 3-phosphoglycerate.</text>
</comment>
<comment type="catalytic activity">
    <reaction evidence="1">
        <text>(2R)-2-phosphoglycerate = (2R)-3-phosphoglycerate</text>
        <dbReference type="Rhea" id="RHEA:15901"/>
        <dbReference type="ChEBI" id="CHEBI:58272"/>
        <dbReference type="ChEBI" id="CHEBI:58289"/>
        <dbReference type="EC" id="5.4.2.12"/>
    </reaction>
</comment>
<comment type="pathway">
    <text evidence="1">Carbohydrate degradation; glycolysis; pyruvate from D-glyceraldehyde 3-phosphate: step 3/5.</text>
</comment>
<comment type="similarity">
    <text evidence="1">Belongs to the BPG-independent phosphoglycerate mutase family. A-PGAM subfamily.</text>
</comment>
<dbReference type="EC" id="5.4.2.12" evidence="1"/>
<dbReference type="EMBL" id="CP000867">
    <property type="protein sequence ID" value="ABX02047.1"/>
    <property type="molecule type" value="Genomic_DNA"/>
</dbReference>
<dbReference type="SMR" id="A9A9M4"/>
<dbReference type="STRING" id="444158.MmarC6_1234"/>
<dbReference type="KEGG" id="mmx:MmarC6_1234"/>
<dbReference type="eggNOG" id="arCOG01696">
    <property type="taxonomic scope" value="Archaea"/>
</dbReference>
<dbReference type="HOGENOM" id="CLU_034906_2_0_2"/>
<dbReference type="OrthoDB" id="52918at2157"/>
<dbReference type="PhylomeDB" id="A9A9M4"/>
<dbReference type="UniPathway" id="UPA00109">
    <property type="reaction ID" value="UER00186"/>
</dbReference>
<dbReference type="GO" id="GO:0046872">
    <property type="term" value="F:metal ion binding"/>
    <property type="evidence" value="ECO:0007669"/>
    <property type="project" value="InterPro"/>
</dbReference>
<dbReference type="GO" id="GO:0004619">
    <property type="term" value="F:phosphoglycerate mutase activity"/>
    <property type="evidence" value="ECO:0007669"/>
    <property type="project" value="UniProtKB-EC"/>
</dbReference>
<dbReference type="GO" id="GO:0006096">
    <property type="term" value="P:glycolytic process"/>
    <property type="evidence" value="ECO:0007669"/>
    <property type="project" value="UniProtKB-UniRule"/>
</dbReference>
<dbReference type="CDD" id="cd16011">
    <property type="entry name" value="iPGM_like"/>
    <property type="match status" value="1"/>
</dbReference>
<dbReference type="Gene3D" id="3.40.720.10">
    <property type="entry name" value="Alkaline Phosphatase, subunit A"/>
    <property type="match status" value="2"/>
</dbReference>
<dbReference type="HAMAP" id="MF_01402_A">
    <property type="entry name" value="ApgM_A"/>
    <property type="match status" value="1"/>
</dbReference>
<dbReference type="InterPro" id="IPR017850">
    <property type="entry name" value="Alkaline_phosphatase_core_sf"/>
</dbReference>
<dbReference type="InterPro" id="IPR023665">
    <property type="entry name" value="ApgAM_prokaryotes"/>
</dbReference>
<dbReference type="InterPro" id="IPR006124">
    <property type="entry name" value="Metalloenzyme"/>
</dbReference>
<dbReference type="InterPro" id="IPR004456">
    <property type="entry name" value="Pglycerate_mutase_ApgM"/>
</dbReference>
<dbReference type="NCBIfam" id="TIGR00306">
    <property type="entry name" value="apgM"/>
    <property type="match status" value="1"/>
</dbReference>
<dbReference type="NCBIfam" id="NF003104">
    <property type="entry name" value="PRK04024.1"/>
    <property type="match status" value="1"/>
</dbReference>
<dbReference type="PANTHER" id="PTHR31209">
    <property type="entry name" value="COFACTOR-INDEPENDENT PHOSPHOGLYCERATE MUTASE"/>
    <property type="match status" value="1"/>
</dbReference>
<dbReference type="PANTHER" id="PTHR31209:SF0">
    <property type="entry name" value="METALLOENZYME DOMAIN-CONTAINING PROTEIN"/>
    <property type="match status" value="1"/>
</dbReference>
<dbReference type="Pfam" id="PF01676">
    <property type="entry name" value="Metalloenzyme"/>
    <property type="match status" value="1"/>
</dbReference>
<dbReference type="Pfam" id="PF10143">
    <property type="entry name" value="PhosphMutase"/>
    <property type="match status" value="1"/>
</dbReference>
<dbReference type="PIRSF" id="PIRSF006392">
    <property type="entry name" value="IPGAM_arch"/>
    <property type="match status" value="1"/>
</dbReference>
<dbReference type="SUPFAM" id="SSF53649">
    <property type="entry name" value="Alkaline phosphatase-like"/>
    <property type="match status" value="1"/>
</dbReference>
<gene>
    <name evidence="1" type="primary">apgM</name>
    <name type="ordered locus">MmarC6_1234</name>
</gene>